<accession>P22793</accession>
<organism>
    <name type="scientific">Ovis aries</name>
    <name type="common">Sheep</name>
    <dbReference type="NCBI Taxonomy" id="9940"/>
    <lineage>
        <taxon>Eukaryota</taxon>
        <taxon>Metazoa</taxon>
        <taxon>Chordata</taxon>
        <taxon>Craniata</taxon>
        <taxon>Vertebrata</taxon>
        <taxon>Euteleostomi</taxon>
        <taxon>Mammalia</taxon>
        <taxon>Eutheria</taxon>
        <taxon>Laurasiatheria</taxon>
        <taxon>Artiodactyla</taxon>
        <taxon>Ruminantia</taxon>
        <taxon>Pecora</taxon>
        <taxon>Bovidae</taxon>
        <taxon>Caprinae</taxon>
        <taxon>Ovis</taxon>
    </lineage>
</organism>
<proteinExistence type="evidence at transcript level"/>
<protein>
    <recommendedName>
        <fullName>Trichohyalin</fullName>
    </recommendedName>
</protein>
<sequence>MSPLLRSIFNITKIFNQYASHDCDGTTLSKKDLKNLLEREFGEILRKPHDPETVDLVLELQDRDRDGLIDFHEFLAIVFKVAAACYYALGQASGLNEKEAKCERKGNPLQDRRREDQRRFEPQDRQLEERRLKRQELEELAEEEELREKQVRREQRLQRREQEEYGGEEELQQRPKGRELEELLNREQRFERQEQRERQRLQVEQQQRQRGELRERQEEVQLQKRETQELQRERLEEEQQLQKQKRGLEERLLEQERREQELRRKEQERREQQLRQEQEEATQEEISERGESRTSRCQWQLESEADARQRKVYSRPHRQEQQSRRQEQELLERQQEQQISEEVQSLQEDQGRQRLKQEQRYDQNWRWQLEEESQRRRYTLYAKPAQREQVREEEQLRLKEEKLQREKRRQERERQYREVELQREEERLQREEEQLQREEREKRRRQEREKQYLEKVELWEEEQLQREEREKRRQEREKQYLEKVELREEEQLQRQEREKRRQERERQYLEKVELQEEEQLQREEREKRRQERERQYLEKVELQEEEQLQRQEREKRRQEREKQYLEKVELQEEEQLQRQERQKRRQEREKQYLEKVELQEEEQLQRQEREKRRQERERQYLEKVELQEEEQVQRQEREKRRQERERQYLEKELQRQEERLQEEEQLLREEREKRRQERERQYLEKVELQEEEQLQREEREKRRQERERQYLEKEELQRQEERLQREKEQLQREDREKRRQVRERKYLEEELQQEEDRLQREKQLLREDREKRQYLEKVELQREEEQLQREKRRQERERQYREEELLREEERLHRKEQQLQREECEKRRRQELERQLEEEELQRLDRKRQFRDDDQHQNEVRNSRVYSKHRENKEKSRQLDDSWVRESQFQQDLRPLQDEQEEKREREQEWRSRQKRDSQFPAEQLLEREQQKETERRDRKFREEEQLLKGQREEKIRYLEEDRKFREEEQQLRRLEREQQLRQERDRKFREELSRQERDRKFREEEQLLQEREEQLRRQERDRKFREEEQLLQEREEQLRRQERDRKFREEEQLLQEREEQLRRQERDRKFREEEQQLRLLEREQQLRQERNRKFREEQLLREREEQLRLQEGEPQLRQKRDRKFHEEEQLLQEREEQLRRQERDRKFREEAQILKEREEQLRRQERDRKFREEEQLLQEREELRRQEREPQLRQERDRKFREEEQLLQEREKLRRQEREPQLRQERDRKFHEEEQLLQEREEQLRRQERDRKFREEAQLLQEREEQLRRQERDRKFREEEQLLQEREEQLRRQERDRKFREEEQLLQEREEQLRRQERDRKFREEEQLLKESEEQLRRQERDRKFHEKEHLLREREEQQLRRQELEGVFSQEEQLRRAEQEEEQRRQRQRDRKFLEEEQSLQREREEEKRRVQEQDRKFLEQEEQLHREEQEELRRRQQLDQQYRAEEQFAREEKRRRQEQELRQEEQRRRQERERKFREEEQLRRQQQEEQKRRQERDVQQSRRQVWEEDKGRRQVLEAGKRQFASAPVRSSPLYEYIQEQRSQYRP</sequence>
<keyword id="KW-0025">Alternative splicing</keyword>
<keyword id="KW-0106">Calcium</keyword>
<keyword id="KW-0164">Citrullination</keyword>
<keyword id="KW-0417">Keratinization</keyword>
<keyword id="KW-0479">Metal-binding</keyword>
<keyword id="KW-1185">Reference proteome</keyword>
<keyword id="KW-0677">Repeat</keyword>
<evidence type="ECO:0000255" key="1">
    <source>
        <dbReference type="PROSITE-ProRule" id="PRU00448"/>
    </source>
</evidence>
<evidence type="ECO:0000256" key="2">
    <source>
        <dbReference type="SAM" id="MobiDB-lite"/>
    </source>
</evidence>
<evidence type="ECO:0000305" key="3"/>
<name>TRHY_SHEEP</name>
<comment type="function">
    <text>Intermediate filament-associated protein that associates in regular arrays with keratin intermediate filaments (KIF) of the inner root sheath cells of the hair follicle and the granular layer of the epidermis. It later becomes cross-linked to KIF by isodipeptide bonds. It may serve as scaffold protein, together with involucrin, in the organization of the cell envelope or even anchor the cell envelope to the KIF network. It may be involved in its own calcium-dependent postsynthetic processing during terminal differentiation.</text>
</comment>
<comment type="subunit">
    <text evidence="3">Homodimer.</text>
</comment>
<comment type="alternative products">
    <event type="alternative splicing"/>
    <isoform>
        <id>P22793-1</id>
        <name>Long</name>
        <sequence type="displayed"/>
    </isoform>
    <isoform>
        <id>P22793-2</id>
        <name>Short</name>
        <sequence type="described" ref="VSP_000847 VSP_000848"/>
    </isoform>
    <text>Additional isoforms seem to exist.</text>
</comment>
<comment type="tissue specificity">
    <text>Found in the hard keratinizing tissues such as the inner root sheath (IRS) of hair follicles and medulla, and in the epithelia of the tongue, hoof and rumen.</text>
</comment>
<comment type="domain">
    <text>Consists of nine domains. Domain 1 contains two EF-hand calcium-binding domains. Domains 2-4, 6, and 8 are almost entirely alpha-helical, configured as a series of peptide repeats of varying regularity, and are thought to form a single-stranded alpha-helical rod stabilized by ionic interactions. Domain 6 is the most regular and may bind KIF directly by ionic interactions. Domains 5 and 7 are less well organized and may induce folds in the molecule. Domain 9 contains the C-terminus, conserved among different species.</text>
</comment>
<comment type="PTM">
    <text>Substrate of transglutaminase. Some 200 arginines are probably converted to citrullines by peptidylarginine deimidase.</text>
</comment>
<comment type="similarity">
    <text evidence="3">Belongs to the S100-fused protein family.</text>
</comment>
<reference key="1">
    <citation type="journal article" date="1993" name="J. Cell Biol.">
        <title>Analysis of the sheep trichohyalin gene: potential structural and calcium-binding roles of trichohyalin in the hair follicle.</title>
        <authorList>
            <person name="Fietz M.J."/>
            <person name="McLaughlan C.J."/>
            <person name="Campbell M.T."/>
            <person name="Rogers G.E."/>
        </authorList>
    </citation>
    <scope>NUCLEOTIDE SEQUENCE [GENOMIC DNA]</scope>
</reference>
<reference key="2">
    <citation type="journal article" date="1990" name="J. Cell Biol.">
        <title>The cDNA-deduced amino acid sequence for trichohyalin, a differentiation marker in the hair follicle, contains a 23 amino acid repeat.</title>
        <authorList>
            <person name="Fietz M.J."/>
            <person name="Presland R.B."/>
            <person name="Rogers G.E."/>
        </authorList>
    </citation>
    <scope>NUCLEOTIDE SEQUENCE [MRNA] OF 1016-1549</scope>
    <source>
        <strain>Merino-Dorset horn X Border Leicester</strain>
        <tissue>Wool follicle</tissue>
    </source>
</reference>
<gene>
    <name type="primary">TCHH</name>
    <name type="synonym">THH</name>
</gene>
<dbReference type="EMBL" id="Z18361">
    <property type="protein sequence ID" value="CAA79165.1"/>
    <property type="molecule type" value="Genomic_DNA"/>
</dbReference>
<dbReference type="EMBL" id="X51695">
    <property type="protein sequence ID" value="CAA35992.1"/>
    <property type="molecule type" value="mRNA"/>
</dbReference>
<dbReference type="PIR" id="A40691">
    <property type="entry name" value="A40691"/>
</dbReference>
<dbReference type="SMR" id="P22793"/>
<dbReference type="STRING" id="9940.ENSOARP00000022657"/>
<dbReference type="PaxDb" id="9940-ENSOARP00000022657"/>
<dbReference type="eggNOG" id="ENOG502QQH0">
    <property type="taxonomic scope" value="Eukaryota"/>
</dbReference>
<dbReference type="Proteomes" id="UP000002356">
    <property type="component" value="Unplaced"/>
</dbReference>
<dbReference type="GO" id="GO:0005509">
    <property type="term" value="F:calcium ion binding"/>
    <property type="evidence" value="ECO:0007669"/>
    <property type="project" value="InterPro"/>
</dbReference>
<dbReference type="GO" id="GO:0046914">
    <property type="term" value="F:transition metal ion binding"/>
    <property type="evidence" value="ECO:0007669"/>
    <property type="project" value="InterPro"/>
</dbReference>
<dbReference type="GO" id="GO:0045109">
    <property type="term" value="P:intermediate filament organization"/>
    <property type="evidence" value="ECO:0007669"/>
    <property type="project" value="InterPro"/>
</dbReference>
<dbReference type="GO" id="GO:0031424">
    <property type="term" value="P:keratinization"/>
    <property type="evidence" value="ECO:0007669"/>
    <property type="project" value="UniProtKB-KW"/>
</dbReference>
<dbReference type="CDD" id="cd00213">
    <property type="entry name" value="S-100"/>
    <property type="match status" value="1"/>
</dbReference>
<dbReference type="Gene3D" id="1.10.238.10">
    <property type="entry name" value="EF-hand"/>
    <property type="match status" value="1"/>
</dbReference>
<dbReference type="InterPro" id="IPR011992">
    <property type="entry name" value="EF-hand-dom_pair"/>
</dbReference>
<dbReference type="InterPro" id="IPR018247">
    <property type="entry name" value="EF_Hand_1_Ca_BS"/>
</dbReference>
<dbReference type="InterPro" id="IPR002048">
    <property type="entry name" value="EF_hand_dom"/>
</dbReference>
<dbReference type="InterPro" id="IPR034325">
    <property type="entry name" value="S-100_dom"/>
</dbReference>
<dbReference type="InterPro" id="IPR001751">
    <property type="entry name" value="S100/CaBP7/8-like_CS"/>
</dbReference>
<dbReference type="InterPro" id="IPR013787">
    <property type="entry name" value="S100_Ca-bd_sub"/>
</dbReference>
<dbReference type="InterPro" id="IPR033200">
    <property type="entry name" value="TCHH"/>
</dbReference>
<dbReference type="PANTHER" id="PTHR34855">
    <property type="entry name" value="TRICHOHYALIN"/>
    <property type="match status" value="1"/>
</dbReference>
<dbReference type="PANTHER" id="PTHR34855:SF1">
    <property type="entry name" value="TRICHOHYALIN"/>
    <property type="match status" value="1"/>
</dbReference>
<dbReference type="Pfam" id="PF01023">
    <property type="entry name" value="S_100"/>
    <property type="match status" value="1"/>
</dbReference>
<dbReference type="SMART" id="SM01394">
    <property type="entry name" value="S_100"/>
    <property type="match status" value="1"/>
</dbReference>
<dbReference type="SUPFAM" id="SSF47473">
    <property type="entry name" value="EF-hand"/>
    <property type="match status" value="1"/>
</dbReference>
<dbReference type="PROSITE" id="PS00018">
    <property type="entry name" value="EF_HAND_1"/>
    <property type="match status" value="1"/>
</dbReference>
<dbReference type="PROSITE" id="PS50222">
    <property type="entry name" value="EF_HAND_2"/>
    <property type="match status" value="1"/>
</dbReference>
<dbReference type="PROSITE" id="PS00303">
    <property type="entry name" value="S100_CABP"/>
    <property type="match status" value="1"/>
</dbReference>
<feature type="chain" id="PRO_0000144044" description="Trichohyalin">
    <location>
        <begin position="1"/>
        <end position="1549"/>
    </location>
</feature>
<feature type="domain" description="EF-hand 1" evidence="3">
    <location>
        <begin position="23"/>
        <end position="48"/>
    </location>
</feature>
<feature type="domain" description="EF-hand 2" evidence="1">
    <location>
        <begin position="49"/>
        <end position="84"/>
    </location>
</feature>
<feature type="repeat" description="1-1">
    <location>
        <begin position="413"/>
        <end position="448"/>
    </location>
</feature>
<feature type="repeat" description="1-2">
    <location>
        <begin position="449"/>
        <end position="476"/>
    </location>
</feature>
<feature type="repeat" description="1-3">
    <location>
        <begin position="477"/>
        <end position="504"/>
    </location>
</feature>
<feature type="repeat" description="1-4">
    <location>
        <begin position="505"/>
        <end position="532"/>
    </location>
</feature>
<feature type="repeat" description="1-5">
    <location>
        <begin position="533"/>
        <end position="560"/>
    </location>
</feature>
<feature type="repeat" description="1-6">
    <location>
        <begin position="561"/>
        <end position="588"/>
    </location>
</feature>
<feature type="repeat" description="1-7">
    <location>
        <begin position="589"/>
        <end position="616"/>
    </location>
</feature>
<feature type="repeat" description="1-8">
    <location>
        <begin position="617"/>
        <end position="644"/>
    </location>
</feature>
<feature type="repeat" description="1-9">
    <location>
        <begin position="645"/>
        <end position="678"/>
    </location>
</feature>
<feature type="repeat" description="1-10">
    <location>
        <begin position="679"/>
        <end position="706"/>
    </location>
</feature>
<feature type="repeat" description="1-11">
    <location>
        <begin position="707"/>
        <end position="742"/>
    </location>
</feature>
<feature type="repeat" description="1-12">
    <location>
        <begin position="743"/>
        <end position="771"/>
    </location>
</feature>
<feature type="repeat" description="1-13">
    <location>
        <begin position="772"/>
        <end position="796"/>
    </location>
</feature>
<feature type="repeat" description="1-14">
    <location>
        <begin position="797"/>
        <end position="832"/>
    </location>
</feature>
<feature type="repeat" description="2-1">
    <location>
        <begin position="938"/>
        <end position="961"/>
    </location>
</feature>
<feature type="repeat" description="2-2">
    <location>
        <begin position="962"/>
        <end position="985"/>
    </location>
</feature>
<feature type="repeat" description="2-3">
    <location>
        <begin position="986"/>
        <end position="1021"/>
    </location>
</feature>
<feature type="repeat" description="2-4">
    <location>
        <begin position="1022"/>
        <end position="1044"/>
    </location>
</feature>
<feature type="repeat" description="2-5">
    <location>
        <begin position="1045"/>
        <end position="1067"/>
    </location>
</feature>
<feature type="repeat" description="2-6">
    <location>
        <begin position="1068"/>
        <end position="1090"/>
    </location>
</feature>
<feature type="repeat" description="2-7">
    <location>
        <begin position="1091"/>
        <end position="1121"/>
    </location>
</feature>
<feature type="repeat" description="2-8">
    <location>
        <begin position="1122"/>
        <end position="1144"/>
    </location>
</feature>
<feature type="repeat" description="2-9">
    <location>
        <begin position="1145"/>
        <end position="1167"/>
    </location>
</feature>
<feature type="repeat" description="2-10">
    <location>
        <begin position="1168"/>
        <end position="1197"/>
    </location>
</feature>
<feature type="repeat" description="2-11">
    <location>
        <begin position="1198"/>
        <end position="1227"/>
    </location>
</feature>
<feature type="repeat" description="2-12">
    <location>
        <begin position="1228"/>
        <end position="1250"/>
    </location>
</feature>
<feature type="repeat" description="2-13">
    <location>
        <begin position="1251"/>
        <end position="1273"/>
    </location>
</feature>
<feature type="repeat" description="2-14">
    <location>
        <begin position="1274"/>
        <end position="1296"/>
    </location>
</feature>
<feature type="repeat" description="2-15">
    <location>
        <begin position="1297"/>
        <end position="1319"/>
    </location>
</feature>
<feature type="repeat" description="2-16">
    <location>
        <begin position="1320"/>
        <end position="1342"/>
    </location>
</feature>
<feature type="repeat" description="2-17">
    <location>
        <begin position="1343"/>
        <end position="1368"/>
    </location>
</feature>
<feature type="repeat" description="2-18">
    <location>
        <begin position="1369"/>
        <end position="1391"/>
    </location>
</feature>
<feature type="repeat" description="2-19">
    <location>
        <begin position="1392"/>
        <end position="1416"/>
    </location>
</feature>
<feature type="repeat" description="2-20">
    <location>
        <begin position="1417"/>
        <end position="1439"/>
    </location>
</feature>
<feature type="repeat" description="2-21">
    <location>
        <begin position="1440"/>
        <end position="1461"/>
    </location>
</feature>
<feature type="repeat" description="2-22">
    <location>
        <begin position="1462"/>
        <end position="1484"/>
    </location>
</feature>
<feature type="repeat" description="2-23">
    <location>
        <begin position="1485"/>
        <end position="1507"/>
    </location>
</feature>
<feature type="region of interest" description="S-100-like">
    <location>
        <begin position="1"/>
        <end position="91"/>
    </location>
</feature>
<feature type="region of interest" description="Disordered" evidence="2">
    <location>
        <begin position="97"/>
        <end position="125"/>
    </location>
</feature>
<feature type="region of interest" description="Disordered" evidence="2">
    <location>
        <begin position="157"/>
        <end position="180"/>
    </location>
</feature>
<feature type="region of interest" description="Disordered" evidence="2">
    <location>
        <begin position="262"/>
        <end position="359"/>
    </location>
</feature>
<feature type="region of interest" description="Disordered" evidence="2">
    <location>
        <begin position="404"/>
        <end position="448"/>
    </location>
</feature>
<feature type="region of interest" description="14 X 28 AA approximate tandem repeats">
    <location>
        <begin position="413"/>
        <end position="832"/>
    </location>
</feature>
<feature type="region of interest" description="Disordered" evidence="2">
    <location>
        <begin position="782"/>
        <end position="803"/>
    </location>
</feature>
<feature type="region of interest" description="Disordered" evidence="2">
    <location>
        <begin position="839"/>
        <end position="942"/>
    </location>
</feature>
<feature type="region of interest" description="23 X 23 AA approximate tandem repeats">
    <location>
        <begin position="938"/>
        <end position="1507"/>
    </location>
</feature>
<feature type="region of interest" description="Disordered" evidence="2">
    <location>
        <begin position="980"/>
        <end position="1000"/>
    </location>
</feature>
<feature type="region of interest" description="Disordered" evidence="2">
    <location>
        <begin position="1489"/>
        <end position="1549"/>
    </location>
</feature>
<feature type="compositionally biased region" description="Basic and acidic residues" evidence="2">
    <location>
        <begin position="171"/>
        <end position="180"/>
    </location>
</feature>
<feature type="compositionally biased region" description="Basic and acidic residues" evidence="2">
    <location>
        <begin position="262"/>
        <end position="278"/>
    </location>
</feature>
<feature type="compositionally biased region" description="Basic and acidic residues" evidence="2">
    <location>
        <begin position="317"/>
        <end position="335"/>
    </location>
</feature>
<feature type="compositionally biased region" description="Low complexity" evidence="2">
    <location>
        <begin position="336"/>
        <end position="348"/>
    </location>
</feature>
<feature type="compositionally biased region" description="Basic and acidic residues" evidence="2">
    <location>
        <begin position="349"/>
        <end position="359"/>
    </location>
</feature>
<feature type="compositionally biased region" description="Basic and acidic residues" evidence="2">
    <location>
        <begin position="850"/>
        <end position="884"/>
    </location>
</feature>
<feature type="compositionally biased region" description="Basic and acidic residues" evidence="2">
    <location>
        <begin position="895"/>
        <end position="918"/>
    </location>
</feature>
<feature type="compositionally biased region" description="Basic and acidic residues" evidence="2">
    <location>
        <begin position="925"/>
        <end position="942"/>
    </location>
</feature>
<feature type="compositionally biased region" description="Basic and acidic residues" evidence="2">
    <location>
        <begin position="1489"/>
        <end position="1523"/>
    </location>
</feature>
<feature type="binding site" evidence="3">
    <location>
        <position position="27"/>
    </location>
    <ligand>
        <name>Ca(2+)</name>
        <dbReference type="ChEBI" id="CHEBI:29108"/>
        <label>1</label>
        <note>low affinity</note>
    </ligand>
</feature>
<feature type="binding site" evidence="3">
    <location>
        <position position="32"/>
    </location>
    <ligand>
        <name>Ca(2+)</name>
        <dbReference type="ChEBI" id="CHEBI:29108"/>
        <label>1</label>
        <note>low affinity</note>
    </ligand>
</feature>
<feature type="binding site" evidence="1">
    <location>
        <position position="62"/>
    </location>
    <ligand>
        <name>Ca(2+)</name>
        <dbReference type="ChEBI" id="CHEBI:29108"/>
        <label>2</label>
        <note>high affinity</note>
    </ligand>
</feature>
<feature type="binding site" evidence="1">
    <location>
        <position position="64"/>
    </location>
    <ligand>
        <name>Ca(2+)</name>
        <dbReference type="ChEBI" id="CHEBI:29108"/>
        <label>2</label>
        <note>high affinity</note>
    </ligand>
</feature>
<feature type="binding site" evidence="1">
    <location>
        <position position="66"/>
    </location>
    <ligand>
        <name>Ca(2+)</name>
        <dbReference type="ChEBI" id="CHEBI:29108"/>
        <label>2</label>
        <note>high affinity</note>
    </ligand>
</feature>
<feature type="binding site" evidence="1">
    <location>
        <position position="73"/>
    </location>
    <ligand>
        <name>Ca(2+)</name>
        <dbReference type="ChEBI" id="CHEBI:29108"/>
        <label>2</label>
        <note>high affinity</note>
    </ligand>
</feature>
<feature type="splice variant" id="VSP_000847" description="In isoform Short." evidence="3">
    <location>
        <begin position="1145"/>
        <end position="1197"/>
    </location>
</feature>
<feature type="splice variant" id="VSP_000848" description="In isoform Short." evidence="3">
    <location>
        <begin position="1251"/>
        <end position="1273"/>
    </location>
</feature>
<feature type="sequence conflict" description="In Ref. 2; CAA35992." evidence="3" ref="2">
    <original>E</original>
    <variation>G</variation>
    <location>
        <position position="1399"/>
    </location>
</feature>